<proteinExistence type="inferred from homology"/>
<protein>
    <recommendedName>
        <fullName evidence="1">Ribosomal protein uS12 methylthiotransferase RimO</fullName>
        <shortName evidence="1">uS12 MTTase</shortName>
        <shortName evidence="1">uS12 methylthiotransferase</shortName>
        <ecNumber evidence="1">2.8.4.4</ecNumber>
    </recommendedName>
    <alternativeName>
        <fullName evidence="1">Ribosomal protein uS12 (aspartate-C(3))-methylthiotransferase</fullName>
    </alternativeName>
    <alternativeName>
        <fullName evidence="1">Ribosome maturation factor RimO</fullName>
    </alternativeName>
</protein>
<reference key="1">
    <citation type="submission" date="2008-04" db="EMBL/GenBank/DDBJ databases">
        <title>Complete sequence of Clostridium botulinum strain Eklund.</title>
        <authorList>
            <person name="Brinkac L.M."/>
            <person name="Brown J.L."/>
            <person name="Bruce D."/>
            <person name="Detter C."/>
            <person name="Munk C."/>
            <person name="Smith L.A."/>
            <person name="Smith T.J."/>
            <person name="Sutton G."/>
            <person name="Brettin T.S."/>
        </authorList>
    </citation>
    <scope>NUCLEOTIDE SEQUENCE [LARGE SCALE GENOMIC DNA]</scope>
    <source>
        <strain>Eklund 17B / Type B</strain>
    </source>
</reference>
<keyword id="KW-0004">4Fe-4S</keyword>
<keyword id="KW-0963">Cytoplasm</keyword>
<keyword id="KW-0408">Iron</keyword>
<keyword id="KW-0411">Iron-sulfur</keyword>
<keyword id="KW-0479">Metal-binding</keyword>
<keyword id="KW-0949">S-adenosyl-L-methionine</keyword>
<keyword id="KW-0808">Transferase</keyword>
<name>RIMO_CLOBB</name>
<dbReference type="EC" id="2.8.4.4" evidence="1"/>
<dbReference type="EMBL" id="CP001056">
    <property type="protein sequence ID" value="ACD22764.1"/>
    <property type="molecule type" value="Genomic_DNA"/>
</dbReference>
<dbReference type="SMR" id="B2TJ67"/>
<dbReference type="KEGG" id="cbk:CLL_A1285"/>
<dbReference type="HOGENOM" id="CLU_018697_0_1_9"/>
<dbReference type="Proteomes" id="UP000001195">
    <property type="component" value="Chromosome"/>
</dbReference>
<dbReference type="GO" id="GO:0005829">
    <property type="term" value="C:cytosol"/>
    <property type="evidence" value="ECO:0007669"/>
    <property type="project" value="TreeGrafter"/>
</dbReference>
<dbReference type="GO" id="GO:0051539">
    <property type="term" value="F:4 iron, 4 sulfur cluster binding"/>
    <property type="evidence" value="ECO:0007669"/>
    <property type="project" value="UniProtKB-UniRule"/>
</dbReference>
<dbReference type="GO" id="GO:0035599">
    <property type="term" value="F:aspartic acid methylthiotransferase activity"/>
    <property type="evidence" value="ECO:0007669"/>
    <property type="project" value="TreeGrafter"/>
</dbReference>
<dbReference type="GO" id="GO:0046872">
    <property type="term" value="F:metal ion binding"/>
    <property type="evidence" value="ECO:0007669"/>
    <property type="project" value="UniProtKB-KW"/>
</dbReference>
<dbReference type="GO" id="GO:0103039">
    <property type="term" value="F:protein methylthiotransferase activity"/>
    <property type="evidence" value="ECO:0007669"/>
    <property type="project" value="UniProtKB-EC"/>
</dbReference>
<dbReference type="GO" id="GO:0006400">
    <property type="term" value="P:tRNA modification"/>
    <property type="evidence" value="ECO:0007669"/>
    <property type="project" value="InterPro"/>
</dbReference>
<dbReference type="CDD" id="cd01335">
    <property type="entry name" value="Radical_SAM"/>
    <property type="match status" value="1"/>
</dbReference>
<dbReference type="FunFam" id="3.80.30.20:FF:000001">
    <property type="entry name" value="tRNA-2-methylthio-N(6)-dimethylallyladenosine synthase 2"/>
    <property type="match status" value="1"/>
</dbReference>
<dbReference type="Gene3D" id="3.40.50.12160">
    <property type="entry name" value="Methylthiotransferase, N-terminal domain"/>
    <property type="match status" value="1"/>
</dbReference>
<dbReference type="Gene3D" id="2.40.50.140">
    <property type="entry name" value="Nucleic acid-binding proteins"/>
    <property type="match status" value="1"/>
</dbReference>
<dbReference type="Gene3D" id="3.80.30.20">
    <property type="entry name" value="tm_1862 like domain"/>
    <property type="match status" value="1"/>
</dbReference>
<dbReference type="HAMAP" id="MF_01865">
    <property type="entry name" value="MTTase_RimO"/>
    <property type="match status" value="1"/>
</dbReference>
<dbReference type="InterPro" id="IPR006638">
    <property type="entry name" value="Elp3/MiaA/NifB-like_rSAM"/>
</dbReference>
<dbReference type="InterPro" id="IPR005839">
    <property type="entry name" value="Methylthiotransferase"/>
</dbReference>
<dbReference type="InterPro" id="IPR020612">
    <property type="entry name" value="Methylthiotransferase_CS"/>
</dbReference>
<dbReference type="InterPro" id="IPR013848">
    <property type="entry name" value="Methylthiotransferase_N"/>
</dbReference>
<dbReference type="InterPro" id="IPR038135">
    <property type="entry name" value="Methylthiotransferase_N_sf"/>
</dbReference>
<dbReference type="InterPro" id="IPR012340">
    <property type="entry name" value="NA-bd_OB-fold"/>
</dbReference>
<dbReference type="InterPro" id="IPR005840">
    <property type="entry name" value="Ribosomal_uS12_MeSTrfase_RimO"/>
</dbReference>
<dbReference type="InterPro" id="IPR007197">
    <property type="entry name" value="rSAM"/>
</dbReference>
<dbReference type="InterPro" id="IPR023404">
    <property type="entry name" value="rSAM_horseshoe"/>
</dbReference>
<dbReference type="InterPro" id="IPR002792">
    <property type="entry name" value="TRAM_dom"/>
</dbReference>
<dbReference type="NCBIfam" id="TIGR01125">
    <property type="entry name" value="30S ribosomal protein S12 methylthiotransferase RimO"/>
    <property type="match status" value="1"/>
</dbReference>
<dbReference type="NCBIfam" id="TIGR00089">
    <property type="entry name" value="MiaB/RimO family radical SAM methylthiotransferase"/>
    <property type="match status" value="1"/>
</dbReference>
<dbReference type="PANTHER" id="PTHR43837">
    <property type="entry name" value="RIBOSOMAL PROTEIN S12 METHYLTHIOTRANSFERASE RIMO"/>
    <property type="match status" value="1"/>
</dbReference>
<dbReference type="PANTHER" id="PTHR43837:SF1">
    <property type="entry name" value="RIBOSOMAL PROTEIN US12 METHYLTHIOTRANSFERASE RIMO"/>
    <property type="match status" value="1"/>
</dbReference>
<dbReference type="Pfam" id="PF04055">
    <property type="entry name" value="Radical_SAM"/>
    <property type="match status" value="1"/>
</dbReference>
<dbReference type="Pfam" id="PF18693">
    <property type="entry name" value="TRAM_2"/>
    <property type="match status" value="1"/>
</dbReference>
<dbReference type="Pfam" id="PF00919">
    <property type="entry name" value="UPF0004"/>
    <property type="match status" value="1"/>
</dbReference>
<dbReference type="SFLD" id="SFLDG01082">
    <property type="entry name" value="B12-binding_domain_containing"/>
    <property type="match status" value="1"/>
</dbReference>
<dbReference type="SFLD" id="SFLDS00029">
    <property type="entry name" value="Radical_SAM"/>
    <property type="match status" value="1"/>
</dbReference>
<dbReference type="SFLD" id="SFLDF00274">
    <property type="entry name" value="ribosomal_protein_S12_methylth"/>
    <property type="match status" value="1"/>
</dbReference>
<dbReference type="SMART" id="SM00729">
    <property type="entry name" value="Elp3"/>
    <property type="match status" value="1"/>
</dbReference>
<dbReference type="SUPFAM" id="SSF102114">
    <property type="entry name" value="Radical SAM enzymes"/>
    <property type="match status" value="1"/>
</dbReference>
<dbReference type="PROSITE" id="PS51449">
    <property type="entry name" value="MTTASE_N"/>
    <property type="match status" value="1"/>
</dbReference>
<dbReference type="PROSITE" id="PS01278">
    <property type="entry name" value="MTTASE_RADICAL"/>
    <property type="match status" value="1"/>
</dbReference>
<dbReference type="PROSITE" id="PS51918">
    <property type="entry name" value="RADICAL_SAM"/>
    <property type="match status" value="1"/>
</dbReference>
<dbReference type="PROSITE" id="PS50926">
    <property type="entry name" value="TRAM"/>
    <property type="match status" value="1"/>
</dbReference>
<sequence>MTKYKVGMVSLGCDKNRVDSEIILGKMSNEYEITNNAKEADVIIVNTCGFIESAKQESIDTILEMAEYKNNYKCKLLIATGCLIQRYGDELKNLIPEIDIMLGVNDYNKIDKVIKEFIEGNKEASKLLNYSDENINEGNRILTTQKESAYIRIAEGCNNFCTYCIIPKIRGKFRSRRMENIISEATDLASQGVKELILIAQDTTQYGSDIYGKKNLHVLLKELSKIEGIKWIRVLYCYPEAIYDELIEEIAVNEKVVKYLDIPIQHISDHVLKLMGRKTSKKDITDKIEKLRKSIPNIIIRTTFIVGFPQETQEDFEEILEFLQEYKLDKVGVFKYSREEDTPASKMDGQIDEAIKKEREEKLMLSQEKISNDINKLKVNKKYDILIEEYDGEFYKGRNFEMAPDIDGNVFFESPKNLEIGEFVKVKIIKNMDYDLIGVVEDESCK</sequence>
<gene>
    <name evidence="1" type="primary">rimO</name>
    <name type="ordered locus">CLL_A1285</name>
</gene>
<accession>B2TJ67</accession>
<comment type="function">
    <text evidence="1">Catalyzes the methylthiolation of an aspartic acid residue of ribosomal protein uS12.</text>
</comment>
<comment type="catalytic activity">
    <reaction evidence="1">
        <text>L-aspartate(89)-[ribosomal protein uS12]-hydrogen + (sulfur carrier)-SH + AH2 + 2 S-adenosyl-L-methionine = 3-methylsulfanyl-L-aspartate(89)-[ribosomal protein uS12]-hydrogen + (sulfur carrier)-H + 5'-deoxyadenosine + L-methionine + A + S-adenosyl-L-homocysteine + 2 H(+)</text>
        <dbReference type="Rhea" id="RHEA:37087"/>
        <dbReference type="Rhea" id="RHEA-COMP:10460"/>
        <dbReference type="Rhea" id="RHEA-COMP:10461"/>
        <dbReference type="Rhea" id="RHEA-COMP:14737"/>
        <dbReference type="Rhea" id="RHEA-COMP:14739"/>
        <dbReference type="ChEBI" id="CHEBI:13193"/>
        <dbReference type="ChEBI" id="CHEBI:15378"/>
        <dbReference type="ChEBI" id="CHEBI:17319"/>
        <dbReference type="ChEBI" id="CHEBI:17499"/>
        <dbReference type="ChEBI" id="CHEBI:29917"/>
        <dbReference type="ChEBI" id="CHEBI:29961"/>
        <dbReference type="ChEBI" id="CHEBI:57844"/>
        <dbReference type="ChEBI" id="CHEBI:57856"/>
        <dbReference type="ChEBI" id="CHEBI:59789"/>
        <dbReference type="ChEBI" id="CHEBI:64428"/>
        <dbReference type="ChEBI" id="CHEBI:73599"/>
        <dbReference type="EC" id="2.8.4.4"/>
    </reaction>
</comment>
<comment type="cofactor">
    <cofactor evidence="1">
        <name>[4Fe-4S] cluster</name>
        <dbReference type="ChEBI" id="CHEBI:49883"/>
    </cofactor>
    <text evidence="1">Binds 2 [4Fe-4S] clusters. One cluster is coordinated with 3 cysteines and an exchangeable S-adenosyl-L-methionine.</text>
</comment>
<comment type="subcellular location">
    <subcellularLocation>
        <location evidence="1">Cytoplasm</location>
    </subcellularLocation>
</comment>
<comment type="similarity">
    <text evidence="1">Belongs to the methylthiotransferase family. RimO subfamily.</text>
</comment>
<organism>
    <name type="scientific">Clostridium botulinum (strain Eklund 17B / Type B)</name>
    <dbReference type="NCBI Taxonomy" id="935198"/>
    <lineage>
        <taxon>Bacteria</taxon>
        <taxon>Bacillati</taxon>
        <taxon>Bacillota</taxon>
        <taxon>Clostridia</taxon>
        <taxon>Eubacteriales</taxon>
        <taxon>Clostridiaceae</taxon>
        <taxon>Clostridium</taxon>
    </lineage>
</organism>
<evidence type="ECO:0000255" key="1">
    <source>
        <dbReference type="HAMAP-Rule" id="MF_01865"/>
    </source>
</evidence>
<evidence type="ECO:0000255" key="2">
    <source>
        <dbReference type="PROSITE-ProRule" id="PRU01266"/>
    </source>
</evidence>
<feature type="chain" id="PRO_0000374778" description="Ribosomal protein uS12 methylthiotransferase RimO">
    <location>
        <begin position="1"/>
        <end position="446"/>
    </location>
</feature>
<feature type="domain" description="MTTase N-terminal" evidence="1">
    <location>
        <begin position="4"/>
        <end position="119"/>
    </location>
</feature>
<feature type="domain" description="Radical SAM core" evidence="2">
    <location>
        <begin position="143"/>
        <end position="373"/>
    </location>
</feature>
<feature type="domain" description="TRAM" evidence="1">
    <location>
        <begin position="376"/>
        <end position="442"/>
    </location>
</feature>
<feature type="binding site" evidence="1">
    <location>
        <position position="13"/>
    </location>
    <ligand>
        <name>[4Fe-4S] cluster</name>
        <dbReference type="ChEBI" id="CHEBI:49883"/>
        <label>1</label>
    </ligand>
</feature>
<feature type="binding site" evidence="1">
    <location>
        <position position="48"/>
    </location>
    <ligand>
        <name>[4Fe-4S] cluster</name>
        <dbReference type="ChEBI" id="CHEBI:49883"/>
        <label>1</label>
    </ligand>
</feature>
<feature type="binding site" evidence="1">
    <location>
        <position position="82"/>
    </location>
    <ligand>
        <name>[4Fe-4S] cluster</name>
        <dbReference type="ChEBI" id="CHEBI:49883"/>
        <label>1</label>
    </ligand>
</feature>
<feature type="binding site" evidence="1">
    <location>
        <position position="157"/>
    </location>
    <ligand>
        <name>[4Fe-4S] cluster</name>
        <dbReference type="ChEBI" id="CHEBI:49883"/>
        <label>2</label>
        <note>4Fe-4S-S-AdoMet</note>
    </ligand>
</feature>
<feature type="binding site" evidence="1">
    <location>
        <position position="161"/>
    </location>
    <ligand>
        <name>[4Fe-4S] cluster</name>
        <dbReference type="ChEBI" id="CHEBI:49883"/>
        <label>2</label>
        <note>4Fe-4S-S-AdoMet</note>
    </ligand>
</feature>
<feature type="binding site" evidence="1">
    <location>
        <position position="164"/>
    </location>
    <ligand>
        <name>[4Fe-4S] cluster</name>
        <dbReference type="ChEBI" id="CHEBI:49883"/>
        <label>2</label>
        <note>4Fe-4S-S-AdoMet</note>
    </ligand>
</feature>